<name>PRIM_HHV2H</name>
<dbReference type="EC" id="2.7.7.-" evidence="1"/>
<dbReference type="EMBL" id="Z86099">
    <property type="protein sequence ID" value="CAB06739.1"/>
    <property type="molecule type" value="Genomic_DNA"/>
</dbReference>
<dbReference type="ChEMBL" id="CHEMBL4630722"/>
<dbReference type="Proteomes" id="UP000001874">
    <property type="component" value="Segment"/>
</dbReference>
<dbReference type="GO" id="GO:0042025">
    <property type="term" value="C:host cell nucleus"/>
    <property type="evidence" value="ECO:0007669"/>
    <property type="project" value="UniProtKB-SubCell"/>
</dbReference>
<dbReference type="GO" id="GO:0003899">
    <property type="term" value="F:DNA-directed RNA polymerase activity"/>
    <property type="evidence" value="ECO:0007669"/>
    <property type="project" value="InterPro"/>
</dbReference>
<dbReference type="GO" id="GO:0008270">
    <property type="term" value="F:zinc ion binding"/>
    <property type="evidence" value="ECO:0007669"/>
    <property type="project" value="UniProtKB-KW"/>
</dbReference>
<dbReference type="GO" id="GO:0039686">
    <property type="term" value="P:bidirectional double-stranded viral DNA replication"/>
    <property type="evidence" value="ECO:0007669"/>
    <property type="project" value="InterPro"/>
</dbReference>
<dbReference type="GO" id="GO:0006260">
    <property type="term" value="P:DNA replication"/>
    <property type="evidence" value="ECO:0007669"/>
    <property type="project" value="UniProtKB-KW"/>
</dbReference>
<dbReference type="HAMAP" id="MF_04011">
    <property type="entry name" value="HSV_PRIM"/>
    <property type="match status" value="1"/>
</dbReference>
<dbReference type="InterPro" id="IPR033685">
    <property type="entry name" value="HSV_PRIM"/>
</dbReference>
<dbReference type="Pfam" id="PF03121">
    <property type="entry name" value="Herpes_UL52"/>
    <property type="match status" value="1"/>
</dbReference>
<comment type="function">
    <text evidence="1">Essential component of the helicase/primase complex. Unwinds the DNA at the replication forks and generates single-stranded DNA for both leading and lagging strand synthesis. The primase initiates primer synthesis and thereby produces large amount of short RNA primers on the lagging strand that the polymerase elongates using dNTPs.</text>
</comment>
<comment type="subunit">
    <text evidence="1">Associates with the helicase and the primase-associated factor to form the helicase-primase factor.</text>
</comment>
<comment type="subcellular location">
    <subcellularLocation>
        <location evidence="1">Host nucleus</location>
    </subcellularLocation>
    <text evidence="1">Requires the presence of the primase associated factor to properly localize in the host cell nucleus.</text>
</comment>
<comment type="similarity">
    <text evidence="1">Belongs to the herpesviridae DNA primase family.</text>
</comment>
<gene>
    <name type="ORF">UL52</name>
</gene>
<organism>
    <name type="scientific">Human herpesvirus 2 (strain HG52)</name>
    <name type="common">HHV-2</name>
    <name type="synonym">Human herpes simplex virus 2</name>
    <dbReference type="NCBI Taxonomy" id="10315"/>
    <lineage>
        <taxon>Viruses</taxon>
        <taxon>Duplodnaviria</taxon>
        <taxon>Heunggongvirae</taxon>
        <taxon>Peploviricota</taxon>
        <taxon>Herviviricetes</taxon>
        <taxon>Herpesvirales</taxon>
        <taxon>Orthoherpesviridae</taxon>
        <taxon>Alphaherpesvirinae</taxon>
        <taxon>Simplexvirus</taxon>
        <taxon>Simplexvirus humanalpha2</taxon>
        <taxon>Human herpesvirus 2</taxon>
    </lineage>
</organism>
<organismHost>
    <name type="scientific">Homo sapiens</name>
    <name type="common">Human</name>
    <dbReference type="NCBI Taxonomy" id="9606"/>
</organismHost>
<proteinExistence type="inferred from homology"/>
<protein>
    <recommendedName>
        <fullName evidence="1">DNA primase</fullName>
        <ecNumber evidence="1">2.7.7.-</ecNumber>
    </recommendedName>
</protein>
<evidence type="ECO:0000255" key="1">
    <source>
        <dbReference type="HAMAP-Rule" id="MF_04011"/>
    </source>
</evidence>
<evidence type="ECO:0000256" key="2">
    <source>
        <dbReference type="SAM" id="MobiDB-lite"/>
    </source>
</evidence>
<sequence length="1066" mass="114654">MGTEDCDHEGRSVAAPVEVTALYATDGCVITSSLALLTNCLLGAEPLYIFSYDAYRSDAPNGPTGAPTEQERFEGSRALYRDAGGLNGDSFRVTFCLLGTEVGVTHHPKGRTRPMFVCRFERADDVAVLQDALGRGTPLLPAHVTATLDLEATFALHANIIMALTVAIVHNAPARIGSGSTAPLYEPGESMRSVVGRMSLGQRGLTTLFVHHEARVLGAYRRAYYGSAQSPFWFLSKFGPDEKSLVLAARYYLLQAPRLGGAGATYDLQAVKDICATYAIPHDPRPDTLSAASLTSFAAITRFCCTSQYSRGAAAAGFPLYVERRIAADVRETGALEKFIAHDRSCLRVSDREFITYIYLAHFECFSPPRLATHLRAVTTHDPSPAASTEQPSPLGREAVEQFFRHVRAQLNIREYVKQNVTPRETALAGDAAAAYLRARTYAPAALTPAPAYCGVADSSTKMMGRLAEAERLLVPHGWPAFAPTTPGDDAGGGTAAPQTCGIVKRLLKLAATEQQGTTPPAIAALMQDASVQTPLPVYRITMSPTGQAFAAAARDDWARVTRDARPPEATVVADAAAAPEPGALGRRLTRRICARGPALPPGGLAVGGQMYVNRNEIFNAALAVTNIILDLDIALKEPVPFPRLHEALGHFRRGALAAVQLLFPAARVDPDAYPCYFFKSACRPRAPPVCAGDGPSAGGDDGDGDWFPDAGGPGDEEWEEDTDPMDTTHGPLPDDEAAYLDLLHEQIPAATPSEPDSVVCSCADKIGLRVCLPVPAPYVVHGSLTMRGVARVIQQAVLLDRDFVEAVGSHVKNFLLIDTGVYAHGHSLRLPYFAKIGPDGSACGRLLPVFVIPPACEDVPAFVAAHADPRRFHFHAPPMFSAAPREIRVLHSLGGDYVSFFEKKASRNALEHFGRRETLTEVLGRYDVRPDAGETVEGFASELLGRIVACIEAHFPEHAREYQAVSVRRAVIKDDWVLLQLIPGRGALNQSLSCLRFKHGRASRATARTFLALSVGTNNRLCASLCQQCFATKCDNNRLHTLFTVDAGTPCSRSAPSSTSRPSSS</sequence>
<reference key="1">
    <citation type="journal article" date="1998" name="J. Virol.">
        <title>The genome sequence of herpes simplex virus type 2.</title>
        <authorList>
            <person name="Dolan A."/>
            <person name="Jamieson F.E."/>
            <person name="Cunningham C."/>
            <person name="Barnett B.C."/>
            <person name="McGeoch D.J."/>
        </authorList>
    </citation>
    <scope>NUCLEOTIDE SEQUENCE [LARGE SCALE GENOMIC DNA]</scope>
</reference>
<feature type="chain" id="PRO_0000385149" description="DNA primase">
    <location>
        <begin position="1"/>
        <end position="1066"/>
    </location>
</feature>
<feature type="zinc finger region" description="CHC2-type" evidence="1">
    <location>
        <begin position="995"/>
        <end position="1035"/>
    </location>
</feature>
<feature type="region of interest" description="Disordered" evidence="2">
    <location>
        <begin position="694"/>
        <end position="727"/>
    </location>
</feature>
<feature type="compositionally biased region" description="Acidic residues" evidence="2">
    <location>
        <begin position="715"/>
        <end position="725"/>
    </location>
</feature>
<feature type="site" description="Essential for primase activity" evidence="1">
    <location>
        <position position="631"/>
    </location>
</feature>
<feature type="site" description="Essential for primase activity" evidence="1">
    <location>
        <position position="633"/>
    </location>
</feature>
<accession>P89471</accession>
<keyword id="KW-0235">DNA replication</keyword>
<keyword id="KW-1048">Host nucleus</keyword>
<keyword id="KW-0479">Metal-binding</keyword>
<keyword id="KW-1185">Reference proteome</keyword>
<keyword id="KW-0808">Transferase</keyword>
<keyword id="KW-0862">Zinc</keyword>
<keyword id="KW-0863">Zinc-finger</keyword>